<gene>
    <name evidence="1" type="primary">surE</name>
    <name type="ordered locus">CJJ81176_0317</name>
</gene>
<evidence type="ECO:0000255" key="1">
    <source>
        <dbReference type="HAMAP-Rule" id="MF_00060"/>
    </source>
</evidence>
<keyword id="KW-0963">Cytoplasm</keyword>
<keyword id="KW-0378">Hydrolase</keyword>
<keyword id="KW-0479">Metal-binding</keyword>
<keyword id="KW-0547">Nucleotide-binding</keyword>
<proteinExistence type="inferred from homology"/>
<accession>A1VY14</accession>
<name>SURE_CAMJJ</name>
<protein>
    <recommendedName>
        <fullName evidence="1">5'-nucleotidase SurE</fullName>
        <ecNumber evidence="1">3.1.3.5</ecNumber>
    </recommendedName>
    <alternativeName>
        <fullName evidence="1">Nucleoside 5'-monophosphate phosphohydrolase</fullName>
    </alternativeName>
</protein>
<feature type="chain" id="PRO_1000007718" description="5'-nucleotidase SurE">
    <location>
        <begin position="1"/>
        <end position="258"/>
    </location>
</feature>
<feature type="binding site" evidence="1">
    <location>
        <position position="9"/>
    </location>
    <ligand>
        <name>a divalent metal cation</name>
        <dbReference type="ChEBI" id="CHEBI:60240"/>
    </ligand>
</feature>
<feature type="binding site" evidence="1">
    <location>
        <position position="10"/>
    </location>
    <ligand>
        <name>a divalent metal cation</name>
        <dbReference type="ChEBI" id="CHEBI:60240"/>
    </ligand>
</feature>
<feature type="binding site" evidence="1">
    <location>
        <position position="42"/>
    </location>
    <ligand>
        <name>a divalent metal cation</name>
        <dbReference type="ChEBI" id="CHEBI:60240"/>
    </ligand>
</feature>
<feature type="binding site" evidence="1">
    <location>
        <position position="96"/>
    </location>
    <ligand>
        <name>a divalent metal cation</name>
        <dbReference type="ChEBI" id="CHEBI:60240"/>
    </ligand>
</feature>
<sequence>MKEILITNDDGYESEGLKKLIKMLTKEFKAKITIVAPASEKSACSHSITLTKPLRFVKVGKRFYKLDDGTPADCVYLALHALYKKRLPDLVISGINKGANVGEDITYSGTCAGAMEAVLQGIPAIALSQFYKKSEKELDYKNALQITKKIIQNIFDKGFPLEKKEFLNINFPAKSKIKGIKICKAGKRVYNFEAYSNVNPRGVEYYWLAAANLDFEDEKNSDIALLKKGYATITPIMLDLTAYERMKKVKKWLKANDE</sequence>
<reference key="1">
    <citation type="submission" date="2006-12" db="EMBL/GenBank/DDBJ databases">
        <authorList>
            <person name="Fouts D.E."/>
            <person name="Nelson K.E."/>
            <person name="Sebastian Y."/>
        </authorList>
    </citation>
    <scope>NUCLEOTIDE SEQUENCE [LARGE SCALE GENOMIC DNA]</scope>
    <source>
        <strain>81-176</strain>
    </source>
</reference>
<comment type="function">
    <text evidence="1">Nucleotidase that shows phosphatase activity on nucleoside 5'-monophosphates.</text>
</comment>
<comment type="catalytic activity">
    <reaction evidence="1">
        <text>a ribonucleoside 5'-phosphate + H2O = a ribonucleoside + phosphate</text>
        <dbReference type="Rhea" id="RHEA:12484"/>
        <dbReference type="ChEBI" id="CHEBI:15377"/>
        <dbReference type="ChEBI" id="CHEBI:18254"/>
        <dbReference type="ChEBI" id="CHEBI:43474"/>
        <dbReference type="ChEBI" id="CHEBI:58043"/>
        <dbReference type="EC" id="3.1.3.5"/>
    </reaction>
</comment>
<comment type="cofactor">
    <cofactor evidence="1">
        <name>a divalent metal cation</name>
        <dbReference type="ChEBI" id="CHEBI:60240"/>
    </cofactor>
    <text evidence="1">Binds 1 divalent metal cation per subunit.</text>
</comment>
<comment type="subcellular location">
    <subcellularLocation>
        <location evidence="1">Cytoplasm</location>
    </subcellularLocation>
</comment>
<comment type="similarity">
    <text evidence="1">Belongs to the SurE nucleotidase family.</text>
</comment>
<organism>
    <name type="scientific">Campylobacter jejuni subsp. jejuni serotype O:23/36 (strain 81-176)</name>
    <dbReference type="NCBI Taxonomy" id="354242"/>
    <lineage>
        <taxon>Bacteria</taxon>
        <taxon>Pseudomonadati</taxon>
        <taxon>Campylobacterota</taxon>
        <taxon>Epsilonproteobacteria</taxon>
        <taxon>Campylobacterales</taxon>
        <taxon>Campylobacteraceae</taxon>
        <taxon>Campylobacter</taxon>
    </lineage>
</organism>
<dbReference type="EC" id="3.1.3.5" evidence="1"/>
<dbReference type="EMBL" id="CP000538">
    <property type="protein sequence ID" value="EAQ73372.1"/>
    <property type="molecule type" value="Genomic_DNA"/>
</dbReference>
<dbReference type="RefSeq" id="WP_009881995.1">
    <property type="nucleotide sequence ID" value="NC_008787.1"/>
</dbReference>
<dbReference type="SMR" id="A1VY14"/>
<dbReference type="KEGG" id="cjj:CJJ81176_0317"/>
<dbReference type="eggNOG" id="COG0496">
    <property type="taxonomic scope" value="Bacteria"/>
</dbReference>
<dbReference type="HOGENOM" id="CLU_045192_1_2_7"/>
<dbReference type="Proteomes" id="UP000000646">
    <property type="component" value="Chromosome"/>
</dbReference>
<dbReference type="GO" id="GO:0005737">
    <property type="term" value="C:cytoplasm"/>
    <property type="evidence" value="ECO:0007669"/>
    <property type="project" value="UniProtKB-SubCell"/>
</dbReference>
<dbReference type="GO" id="GO:0008254">
    <property type="term" value="F:3'-nucleotidase activity"/>
    <property type="evidence" value="ECO:0007669"/>
    <property type="project" value="TreeGrafter"/>
</dbReference>
<dbReference type="GO" id="GO:0008253">
    <property type="term" value="F:5'-nucleotidase activity"/>
    <property type="evidence" value="ECO:0007669"/>
    <property type="project" value="UniProtKB-UniRule"/>
</dbReference>
<dbReference type="GO" id="GO:0004309">
    <property type="term" value="F:exopolyphosphatase activity"/>
    <property type="evidence" value="ECO:0007669"/>
    <property type="project" value="TreeGrafter"/>
</dbReference>
<dbReference type="GO" id="GO:0046872">
    <property type="term" value="F:metal ion binding"/>
    <property type="evidence" value="ECO:0007669"/>
    <property type="project" value="UniProtKB-UniRule"/>
</dbReference>
<dbReference type="GO" id="GO:0000166">
    <property type="term" value="F:nucleotide binding"/>
    <property type="evidence" value="ECO:0007669"/>
    <property type="project" value="UniProtKB-KW"/>
</dbReference>
<dbReference type="FunFam" id="3.40.1210.10:FF:000001">
    <property type="entry name" value="5'/3'-nucleotidase SurE"/>
    <property type="match status" value="1"/>
</dbReference>
<dbReference type="Gene3D" id="3.40.1210.10">
    <property type="entry name" value="Survival protein SurE-like phosphatase/nucleotidase"/>
    <property type="match status" value="1"/>
</dbReference>
<dbReference type="HAMAP" id="MF_00060">
    <property type="entry name" value="SurE"/>
    <property type="match status" value="1"/>
</dbReference>
<dbReference type="InterPro" id="IPR030048">
    <property type="entry name" value="SurE"/>
</dbReference>
<dbReference type="InterPro" id="IPR002828">
    <property type="entry name" value="SurE-like_Pase/nucleotidase"/>
</dbReference>
<dbReference type="InterPro" id="IPR036523">
    <property type="entry name" value="SurE-like_sf"/>
</dbReference>
<dbReference type="NCBIfam" id="NF001490">
    <property type="entry name" value="PRK00346.1-4"/>
    <property type="match status" value="1"/>
</dbReference>
<dbReference type="NCBIfam" id="NF001494">
    <property type="entry name" value="PRK00346.2-4"/>
    <property type="match status" value="1"/>
</dbReference>
<dbReference type="NCBIfam" id="TIGR00087">
    <property type="entry name" value="surE"/>
    <property type="match status" value="1"/>
</dbReference>
<dbReference type="PANTHER" id="PTHR30457">
    <property type="entry name" value="5'-NUCLEOTIDASE SURE"/>
    <property type="match status" value="1"/>
</dbReference>
<dbReference type="PANTHER" id="PTHR30457:SF12">
    <property type="entry name" value="5'_3'-NUCLEOTIDASE SURE"/>
    <property type="match status" value="1"/>
</dbReference>
<dbReference type="Pfam" id="PF01975">
    <property type="entry name" value="SurE"/>
    <property type="match status" value="1"/>
</dbReference>
<dbReference type="SUPFAM" id="SSF64167">
    <property type="entry name" value="SurE-like"/>
    <property type="match status" value="1"/>
</dbReference>